<reference key="1">
    <citation type="journal article" date="2005" name="J. Bacteriol.">
        <title>Insights on evolution of virulence and resistance from the complete genome analysis of an early methicillin-resistant Staphylococcus aureus strain and a biofilm-producing methicillin-resistant Staphylococcus epidermidis strain.</title>
        <authorList>
            <person name="Gill S.R."/>
            <person name="Fouts D.E."/>
            <person name="Archer G.L."/>
            <person name="Mongodin E.F."/>
            <person name="DeBoy R.T."/>
            <person name="Ravel J."/>
            <person name="Paulsen I.T."/>
            <person name="Kolonay J.F."/>
            <person name="Brinkac L.M."/>
            <person name="Beanan M.J."/>
            <person name="Dodson R.J."/>
            <person name="Daugherty S.C."/>
            <person name="Madupu R."/>
            <person name="Angiuoli S.V."/>
            <person name="Durkin A.S."/>
            <person name="Haft D.H."/>
            <person name="Vamathevan J.J."/>
            <person name="Khouri H."/>
            <person name="Utterback T.R."/>
            <person name="Lee C."/>
            <person name="Dimitrov G."/>
            <person name="Jiang L."/>
            <person name="Qin H."/>
            <person name="Weidman J."/>
            <person name="Tran K."/>
            <person name="Kang K.H."/>
            <person name="Hance I.R."/>
            <person name="Nelson K.E."/>
            <person name="Fraser C.M."/>
        </authorList>
    </citation>
    <scope>NUCLEOTIDE SEQUENCE [LARGE SCALE GENOMIC DNA]</scope>
    <source>
        <strain>ATCC 35984 / DSM 28319 / BCRC 17069 / CCUG 31568 / BM 3577 / RP62A</strain>
    </source>
</reference>
<comment type="function">
    <text evidence="1">F(1)F(0) ATP synthase produces ATP from ADP in the presence of a proton or sodium gradient. F-type ATPases consist of two structural domains, F(1) containing the extramembraneous catalytic core and F(0) containing the membrane proton channel, linked together by a central stalk and a peripheral stalk. During catalysis, ATP synthesis in the catalytic domain of F(1) is coupled via a rotary mechanism of the central stalk subunits to proton translocation.</text>
</comment>
<comment type="function">
    <text evidence="1">This protein is part of the stalk that links CF(0) to CF(1). It either transmits conformational changes from CF(0) to CF(1) or is implicated in proton conduction.</text>
</comment>
<comment type="subunit">
    <text evidence="1">F-type ATPases have 2 components, F(1) - the catalytic core - and F(0) - the membrane proton channel. F(1) has five subunits: alpha(3), beta(3), gamma(1), delta(1), epsilon(1). F(0) has three main subunits: a(1), b(2) and c(10-14). The alpha and beta chains form an alternating ring which encloses part of the gamma chain. F(1) is attached to F(0) by a central stalk formed by the gamma and epsilon chains, while a peripheral stalk is formed by the delta and b chains.</text>
</comment>
<comment type="subcellular location">
    <subcellularLocation>
        <location evidence="1">Cell membrane</location>
        <topology evidence="1">Peripheral membrane protein</topology>
    </subcellularLocation>
</comment>
<comment type="similarity">
    <text evidence="1">Belongs to the ATPase delta chain family.</text>
</comment>
<accession>Q5HMB6</accession>
<keyword id="KW-0066">ATP synthesis</keyword>
<keyword id="KW-1003">Cell membrane</keyword>
<keyword id="KW-0139">CF(1)</keyword>
<keyword id="KW-0375">Hydrogen ion transport</keyword>
<keyword id="KW-0406">Ion transport</keyword>
<keyword id="KW-0472">Membrane</keyword>
<keyword id="KW-1185">Reference proteome</keyword>
<keyword id="KW-0813">Transport</keyword>
<feature type="chain" id="PRO_0000193487" description="ATP synthase subunit delta">
    <location>
        <begin position="1"/>
        <end position="179"/>
    </location>
</feature>
<name>ATPD_STAEQ</name>
<gene>
    <name evidence="1" type="primary">atpH</name>
    <name type="ordered locus">SERP1712</name>
</gene>
<sequence>MAKVAKKYAKALFDVALDTNQLDVVYEDLETISHSSFDFIKQLKAIDSNPSLTANQREEFVERVYNEANPYVVNTLKVLADNRHISIVENVFKSFQNLYNKYYKQDFAIIESTYELSEDEISRIVELIKKQTELSNVIVNTKINQDLIGGFRVKVGTTVMDGSVRNDLVQLQRKFERAN</sequence>
<protein>
    <recommendedName>
        <fullName evidence="1">ATP synthase subunit delta</fullName>
    </recommendedName>
    <alternativeName>
        <fullName evidence="1">ATP synthase F(1) sector subunit delta</fullName>
    </alternativeName>
    <alternativeName>
        <fullName evidence="1">F-type ATPase subunit delta</fullName>
        <shortName evidence="1">F-ATPase subunit delta</shortName>
    </alternativeName>
</protein>
<proteinExistence type="inferred from homology"/>
<evidence type="ECO:0000255" key="1">
    <source>
        <dbReference type="HAMAP-Rule" id="MF_01416"/>
    </source>
</evidence>
<organism>
    <name type="scientific">Staphylococcus epidermidis (strain ATCC 35984 / DSM 28319 / BCRC 17069 / CCUG 31568 / BM 3577 / RP62A)</name>
    <dbReference type="NCBI Taxonomy" id="176279"/>
    <lineage>
        <taxon>Bacteria</taxon>
        <taxon>Bacillati</taxon>
        <taxon>Bacillota</taxon>
        <taxon>Bacilli</taxon>
        <taxon>Bacillales</taxon>
        <taxon>Staphylococcaceae</taxon>
        <taxon>Staphylococcus</taxon>
    </lineage>
</organism>
<dbReference type="EMBL" id="CP000029">
    <property type="protein sequence ID" value="AAW55098.1"/>
    <property type="molecule type" value="Genomic_DNA"/>
</dbReference>
<dbReference type="RefSeq" id="WP_001829963.1">
    <property type="nucleotide sequence ID" value="NC_002976.3"/>
</dbReference>
<dbReference type="SMR" id="Q5HMB6"/>
<dbReference type="STRING" id="176279.SERP1712"/>
<dbReference type="KEGG" id="ser:SERP1712"/>
<dbReference type="eggNOG" id="COG0712">
    <property type="taxonomic scope" value="Bacteria"/>
</dbReference>
<dbReference type="HOGENOM" id="CLU_085114_4_1_9"/>
<dbReference type="Proteomes" id="UP000000531">
    <property type="component" value="Chromosome"/>
</dbReference>
<dbReference type="GO" id="GO:0005886">
    <property type="term" value="C:plasma membrane"/>
    <property type="evidence" value="ECO:0007669"/>
    <property type="project" value="UniProtKB-SubCell"/>
</dbReference>
<dbReference type="GO" id="GO:0045259">
    <property type="term" value="C:proton-transporting ATP synthase complex"/>
    <property type="evidence" value="ECO:0007669"/>
    <property type="project" value="UniProtKB-KW"/>
</dbReference>
<dbReference type="GO" id="GO:0046933">
    <property type="term" value="F:proton-transporting ATP synthase activity, rotational mechanism"/>
    <property type="evidence" value="ECO:0007669"/>
    <property type="project" value="UniProtKB-UniRule"/>
</dbReference>
<dbReference type="Gene3D" id="1.10.520.20">
    <property type="entry name" value="N-terminal domain of the delta subunit of the F1F0-ATP synthase"/>
    <property type="match status" value="1"/>
</dbReference>
<dbReference type="HAMAP" id="MF_01416">
    <property type="entry name" value="ATP_synth_delta_bact"/>
    <property type="match status" value="1"/>
</dbReference>
<dbReference type="InterPro" id="IPR026015">
    <property type="entry name" value="ATP_synth_OSCP/delta_N_sf"/>
</dbReference>
<dbReference type="InterPro" id="IPR020781">
    <property type="entry name" value="ATPase_OSCP/d_CS"/>
</dbReference>
<dbReference type="InterPro" id="IPR000711">
    <property type="entry name" value="ATPase_OSCP/dsu"/>
</dbReference>
<dbReference type="NCBIfam" id="TIGR01145">
    <property type="entry name" value="ATP_synt_delta"/>
    <property type="match status" value="1"/>
</dbReference>
<dbReference type="NCBIfam" id="NF004399">
    <property type="entry name" value="PRK05758.1-1"/>
    <property type="match status" value="1"/>
</dbReference>
<dbReference type="PANTHER" id="PTHR11910">
    <property type="entry name" value="ATP SYNTHASE DELTA CHAIN"/>
    <property type="match status" value="1"/>
</dbReference>
<dbReference type="Pfam" id="PF00213">
    <property type="entry name" value="OSCP"/>
    <property type="match status" value="1"/>
</dbReference>
<dbReference type="PRINTS" id="PR00125">
    <property type="entry name" value="ATPASEDELTA"/>
</dbReference>
<dbReference type="SUPFAM" id="SSF47928">
    <property type="entry name" value="N-terminal domain of the delta subunit of the F1F0-ATP synthase"/>
    <property type="match status" value="1"/>
</dbReference>
<dbReference type="PROSITE" id="PS00389">
    <property type="entry name" value="ATPASE_DELTA"/>
    <property type="match status" value="1"/>
</dbReference>